<dbReference type="EMBL" id="AE017220">
    <property type="protein sequence ID" value="AAX66769.1"/>
    <property type="molecule type" value="Genomic_DNA"/>
</dbReference>
<dbReference type="RefSeq" id="WP_000517480.1">
    <property type="nucleotide sequence ID" value="NC_006905.1"/>
</dbReference>
<dbReference type="SMR" id="Q57KJ3"/>
<dbReference type="KEGG" id="sec:SCH_2863"/>
<dbReference type="HOGENOM" id="CLU_134863_5_2_6"/>
<dbReference type="Proteomes" id="UP000000538">
    <property type="component" value="Chromosome"/>
</dbReference>
<dbReference type="GO" id="GO:0032153">
    <property type="term" value="C:cell division site"/>
    <property type="evidence" value="ECO:0007669"/>
    <property type="project" value="UniProtKB-UniRule"/>
</dbReference>
<dbReference type="GO" id="GO:0030428">
    <property type="term" value="C:cell septum"/>
    <property type="evidence" value="ECO:0007669"/>
    <property type="project" value="TreeGrafter"/>
</dbReference>
<dbReference type="GO" id="GO:0005886">
    <property type="term" value="C:plasma membrane"/>
    <property type="evidence" value="ECO:0007669"/>
    <property type="project" value="UniProtKB-SubCell"/>
</dbReference>
<dbReference type="GO" id="GO:0043093">
    <property type="term" value="P:FtsZ-dependent cytokinesis"/>
    <property type="evidence" value="ECO:0007669"/>
    <property type="project" value="UniProtKB-UniRule"/>
</dbReference>
<dbReference type="FunFam" id="1.20.5.400:FF:000001">
    <property type="entry name" value="Cell division protein FtsB"/>
    <property type="match status" value="1"/>
</dbReference>
<dbReference type="Gene3D" id="1.20.5.400">
    <property type="match status" value="1"/>
</dbReference>
<dbReference type="HAMAP" id="MF_00599">
    <property type="entry name" value="FtsB"/>
    <property type="match status" value="1"/>
</dbReference>
<dbReference type="InterPro" id="IPR023081">
    <property type="entry name" value="Cell_div_FtsB"/>
</dbReference>
<dbReference type="InterPro" id="IPR007060">
    <property type="entry name" value="FtsL/DivIC"/>
</dbReference>
<dbReference type="NCBIfam" id="NF002058">
    <property type="entry name" value="PRK00888.1"/>
    <property type="match status" value="1"/>
</dbReference>
<dbReference type="PANTHER" id="PTHR37485">
    <property type="entry name" value="CELL DIVISION PROTEIN FTSB"/>
    <property type="match status" value="1"/>
</dbReference>
<dbReference type="PANTHER" id="PTHR37485:SF1">
    <property type="entry name" value="CELL DIVISION PROTEIN FTSB"/>
    <property type="match status" value="1"/>
</dbReference>
<dbReference type="Pfam" id="PF04977">
    <property type="entry name" value="DivIC"/>
    <property type="match status" value="1"/>
</dbReference>
<reference key="1">
    <citation type="journal article" date="2005" name="Nucleic Acids Res.">
        <title>The genome sequence of Salmonella enterica serovar Choleraesuis, a highly invasive and resistant zoonotic pathogen.</title>
        <authorList>
            <person name="Chiu C.-H."/>
            <person name="Tang P."/>
            <person name="Chu C."/>
            <person name="Hu S."/>
            <person name="Bao Q."/>
            <person name="Yu J."/>
            <person name="Chou Y.-Y."/>
            <person name="Wang H.-S."/>
            <person name="Lee Y.-S."/>
        </authorList>
    </citation>
    <scope>NUCLEOTIDE SEQUENCE [LARGE SCALE GENOMIC DNA]</scope>
    <source>
        <strain>SC-B67</strain>
    </source>
</reference>
<sequence>MGKLTLLLLALLVWLQYSLWFGKNGIHDYSRVNDDVVAQQATNAKLKARNDQLFAEIDDLNGGQEAIEERARNELSMTKPGETFYRLVPDASKRAATAGQTHR</sequence>
<comment type="function">
    <text evidence="1">Essential cell division protein. May link together the upstream cell division proteins, which are predominantly cytoplasmic, with the downstream cell division proteins, which are predominantly periplasmic.</text>
</comment>
<comment type="subunit">
    <text evidence="1">Part of a complex composed of FtsB, FtsL and FtsQ.</text>
</comment>
<comment type="subcellular location">
    <subcellularLocation>
        <location evidence="1">Cell inner membrane</location>
        <topology evidence="1">Single-pass type II membrane protein</topology>
    </subcellularLocation>
    <text evidence="1">Localizes to the division septum.</text>
</comment>
<comment type="similarity">
    <text evidence="1">Belongs to the FtsB family.</text>
</comment>
<proteinExistence type="inferred from homology"/>
<organism>
    <name type="scientific">Salmonella choleraesuis (strain SC-B67)</name>
    <dbReference type="NCBI Taxonomy" id="321314"/>
    <lineage>
        <taxon>Bacteria</taxon>
        <taxon>Pseudomonadati</taxon>
        <taxon>Pseudomonadota</taxon>
        <taxon>Gammaproteobacteria</taxon>
        <taxon>Enterobacterales</taxon>
        <taxon>Enterobacteriaceae</taxon>
        <taxon>Salmonella</taxon>
    </lineage>
</organism>
<evidence type="ECO:0000255" key="1">
    <source>
        <dbReference type="HAMAP-Rule" id="MF_00599"/>
    </source>
</evidence>
<gene>
    <name evidence="1" type="primary">ftsB</name>
    <name type="ordered locus">SCH_2863</name>
</gene>
<accession>Q57KJ3</accession>
<keyword id="KW-0131">Cell cycle</keyword>
<keyword id="KW-0132">Cell division</keyword>
<keyword id="KW-0997">Cell inner membrane</keyword>
<keyword id="KW-1003">Cell membrane</keyword>
<keyword id="KW-0175">Coiled coil</keyword>
<keyword id="KW-0472">Membrane</keyword>
<keyword id="KW-0812">Transmembrane</keyword>
<keyword id="KW-1133">Transmembrane helix</keyword>
<name>FTSB_SALCH</name>
<protein>
    <recommendedName>
        <fullName evidence="1">Cell division protein FtsB</fullName>
    </recommendedName>
</protein>
<feature type="chain" id="PRO_1000025720" description="Cell division protein FtsB">
    <location>
        <begin position="1"/>
        <end position="103"/>
    </location>
</feature>
<feature type="topological domain" description="Cytoplasmic" evidence="1">
    <location>
        <begin position="1"/>
        <end position="3"/>
    </location>
</feature>
<feature type="transmembrane region" description="Helical" evidence="1">
    <location>
        <begin position="4"/>
        <end position="21"/>
    </location>
</feature>
<feature type="topological domain" description="Periplasmic" evidence="1">
    <location>
        <begin position="22"/>
        <end position="103"/>
    </location>
</feature>
<feature type="coiled-coil region" evidence="1">
    <location>
        <begin position="33"/>
        <end position="62"/>
    </location>
</feature>